<comment type="function">
    <text evidence="3">May play a role in the regulation of neuronal activity.</text>
</comment>
<comment type="subcellular location">
    <subcellularLocation>
        <location evidence="2">Nucleus membrane</location>
        <topology evidence="2">Multi-pass membrane protein</topology>
    </subcellularLocation>
    <subcellularLocation>
        <location evidence="2">Cell projection</location>
        <location evidence="2">Axon</location>
    </subcellularLocation>
    <subcellularLocation>
        <location evidence="1">Rough endoplasmic reticulum membrane</location>
        <topology evidence="4">Multi-pass membrane protein</topology>
    </subcellularLocation>
</comment>
<comment type="similarity">
    <text evidence="4">Belongs to the macoilin family.</text>
</comment>
<evidence type="ECO:0000250" key="1">
    <source>
        <dbReference type="UniProtKB" id="P91193"/>
    </source>
</evidence>
<evidence type="ECO:0000250" key="2">
    <source>
        <dbReference type="UniProtKB" id="Q7TQE6"/>
    </source>
</evidence>
<evidence type="ECO:0000250" key="3">
    <source>
        <dbReference type="UniProtKB" id="Q8N5G2"/>
    </source>
</evidence>
<evidence type="ECO:0000255" key="4"/>
<evidence type="ECO:0000256" key="5">
    <source>
        <dbReference type="SAM" id="MobiDB-lite"/>
    </source>
</evidence>
<evidence type="ECO:0000305" key="6"/>
<evidence type="ECO:0000312" key="7">
    <source>
        <dbReference type="EMBL" id="AAI71392.1"/>
    </source>
</evidence>
<evidence type="ECO:0000312" key="8">
    <source>
        <dbReference type="EMBL" id="AAX11928.1"/>
    </source>
</evidence>
<evidence type="ECO:0000312" key="9">
    <source>
        <dbReference type="ZFIN" id="ZDB-GENE-040426-1188"/>
    </source>
</evidence>
<accession>Q2TLY1</accession>
<accession>B7ZUY4</accession>
<organism>
    <name type="scientific">Danio rerio</name>
    <name type="common">Zebrafish</name>
    <name type="synonym">Brachydanio rerio</name>
    <dbReference type="NCBI Taxonomy" id="7955"/>
    <lineage>
        <taxon>Eukaryota</taxon>
        <taxon>Metazoa</taxon>
        <taxon>Chordata</taxon>
        <taxon>Craniata</taxon>
        <taxon>Vertebrata</taxon>
        <taxon>Euteleostomi</taxon>
        <taxon>Actinopterygii</taxon>
        <taxon>Neopterygii</taxon>
        <taxon>Teleostei</taxon>
        <taxon>Ostariophysi</taxon>
        <taxon>Cypriniformes</taxon>
        <taxon>Danionidae</taxon>
        <taxon>Danioninae</taxon>
        <taxon>Danio</taxon>
    </lineage>
</organism>
<protein>
    <recommendedName>
        <fullName evidence="8">Macoilin-2</fullName>
    </recommendedName>
    <alternativeName>
        <fullName>Transmembrane protein 57b</fullName>
    </alternativeName>
</protein>
<reference evidence="8" key="1">
    <citation type="submission" date="2004-12" db="EMBL/GenBank/DDBJ databases">
        <title>Identification of Macoilin as a novel membrane-associated coiled-coil tetraspanin protein.</title>
        <authorList>
            <person name="Huang C.-H."/>
            <person name="Chen Y."/>
        </authorList>
    </citation>
    <scope>NUCLEOTIDE SEQUENCE [MRNA]</scope>
</reference>
<reference key="2">
    <citation type="journal article" date="2013" name="Nature">
        <title>The zebrafish reference genome sequence and its relationship to the human genome.</title>
        <authorList>
            <person name="Howe K."/>
            <person name="Clark M.D."/>
            <person name="Torroja C.F."/>
            <person name="Torrance J."/>
            <person name="Berthelot C."/>
            <person name="Muffato M."/>
            <person name="Collins J.E."/>
            <person name="Humphray S."/>
            <person name="McLaren K."/>
            <person name="Matthews L."/>
            <person name="McLaren S."/>
            <person name="Sealy I."/>
            <person name="Caccamo M."/>
            <person name="Churcher C."/>
            <person name="Scott C."/>
            <person name="Barrett J.C."/>
            <person name="Koch R."/>
            <person name="Rauch G.J."/>
            <person name="White S."/>
            <person name="Chow W."/>
            <person name="Kilian B."/>
            <person name="Quintais L.T."/>
            <person name="Guerra-Assuncao J.A."/>
            <person name="Zhou Y."/>
            <person name="Gu Y."/>
            <person name="Yen J."/>
            <person name="Vogel J.H."/>
            <person name="Eyre T."/>
            <person name="Redmond S."/>
            <person name="Banerjee R."/>
            <person name="Chi J."/>
            <person name="Fu B."/>
            <person name="Langley E."/>
            <person name="Maguire S.F."/>
            <person name="Laird G.K."/>
            <person name="Lloyd D."/>
            <person name="Kenyon E."/>
            <person name="Donaldson S."/>
            <person name="Sehra H."/>
            <person name="Almeida-King J."/>
            <person name="Loveland J."/>
            <person name="Trevanion S."/>
            <person name="Jones M."/>
            <person name="Quail M."/>
            <person name="Willey D."/>
            <person name="Hunt A."/>
            <person name="Burton J."/>
            <person name="Sims S."/>
            <person name="McLay K."/>
            <person name="Plumb B."/>
            <person name="Davis J."/>
            <person name="Clee C."/>
            <person name="Oliver K."/>
            <person name="Clark R."/>
            <person name="Riddle C."/>
            <person name="Elliot D."/>
            <person name="Threadgold G."/>
            <person name="Harden G."/>
            <person name="Ware D."/>
            <person name="Begum S."/>
            <person name="Mortimore B."/>
            <person name="Kerry G."/>
            <person name="Heath P."/>
            <person name="Phillimore B."/>
            <person name="Tracey A."/>
            <person name="Corby N."/>
            <person name="Dunn M."/>
            <person name="Johnson C."/>
            <person name="Wood J."/>
            <person name="Clark S."/>
            <person name="Pelan S."/>
            <person name="Griffiths G."/>
            <person name="Smith M."/>
            <person name="Glithero R."/>
            <person name="Howden P."/>
            <person name="Barker N."/>
            <person name="Lloyd C."/>
            <person name="Stevens C."/>
            <person name="Harley J."/>
            <person name="Holt K."/>
            <person name="Panagiotidis G."/>
            <person name="Lovell J."/>
            <person name="Beasley H."/>
            <person name="Henderson C."/>
            <person name="Gordon D."/>
            <person name="Auger K."/>
            <person name="Wright D."/>
            <person name="Collins J."/>
            <person name="Raisen C."/>
            <person name="Dyer L."/>
            <person name="Leung K."/>
            <person name="Robertson L."/>
            <person name="Ambridge K."/>
            <person name="Leongamornlert D."/>
            <person name="McGuire S."/>
            <person name="Gilderthorp R."/>
            <person name="Griffiths C."/>
            <person name="Manthravadi D."/>
            <person name="Nichol S."/>
            <person name="Barker G."/>
            <person name="Whitehead S."/>
            <person name="Kay M."/>
            <person name="Brown J."/>
            <person name="Murnane C."/>
            <person name="Gray E."/>
            <person name="Humphries M."/>
            <person name="Sycamore N."/>
            <person name="Barker D."/>
            <person name="Saunders D."/>
            <person name="Wallis J."/>
            <person name="Babbage A."/>
            <person name="Hammond S."/>
            <person name="Mashreghi-Mohammadi M."/>
            <person name="Barr L."/>
            <person name="Martin S."/>
            <person name="Wray P."/>
            <person name="Ellington A."/>
            <person name="Matthews N."/>
            <person name="Ellwood M."/>
            <person name="Woodmansey R."/>
            <person name="Clark G."/>
            <person name="Cooper J."/>
            <person name="Tromans A."/>
            <person name="Grafham D."/>
            <person name="Skuce C."/>
            <person name="Pandian R."/>
            <person name="Andrews R."/>
            <person name="Harrison E."/>
            <person name="Kimberley A."/>
            <person name="Garnett J."/>
            <person name="Fosker N."/>
            <person name="Hall R."/>
            <person name="Garner P."/>
            <person name="Kelly D."/>
            <person name="Bird C."/>
            <person name="Palmer S."/>
            <person name="Gehring I."/>
            <person name="Berger A."/>
            <person name="Dooley C.M."/>
            <person name="Ersan-Urun Z."/>
            <person name="Eser C."/>
            <person name="Geiger H."/>
            <person name="Geisler M."/>
            <person name="Karotki L."/>
            <person name="Kirn A."/>
            <person name="Konantz J."/>
            <person name="Konantz M."/>
            <person name="Oberlander M."/>
            <person name="Rudolph-Geiger S."/>
            <person name="Teucke M."/>
            <person name="Lanz C."/>
            <person name="Raddatz G."/>
            <person name="Osoegawa K."/>
            <person name="Zhu B."/>
            <person name="Rapp A."/>
            <person name="Widaa S."/>
            <person name="Langford C."/>
            <person name="Yang F."/>
            <person name="Schuster S.C."/>
            <person name="Carter N.P."/>
            <person name="Harrow J."/>
            <person name="Ning Z."/>
            <person name="Herrero J."/>
            <person name="Searle S.M."/>
            <person name="Enright A."/>
            <person name="Geisler R."/>
            <person name="Plasterk R.H."/>
            <person name="Lee C."/>
            <person name="Westerfield M."/>
            <person name="de Jong P.J."/>
            <person name="Zon L.I."/>
            <person name="Postlethwait J.H."/>
            <person name="Nusslein-Volhard C."/>
            <person name="Hubbard T.J."/>
            <person name="Roest Crollius H."/>
            <person name="Rogers J."/>
            <person name="Stemple D.L."/>
        </authorList>
    </citation>
    <scope>NUCLEOTIDE SEQUENCE [LARGE SCALE GENOMIC DNA]</scope>
    <source>
        <strain>Tuebingen</strain>
    </source>
</reference>
<reference evidence="8" key="3">
    <citation type="submission" date="2008-11" db="EMBL/GenBank/DDBJ databases">
        <authorList>
            <consortium name="NIH - Zebrafish Gene Collection (ZGC) project"/>
        </authorList>
    </citation>
    <scope>NUCLEOTIDE SEQUENCE [LARGE SCALE MRNA]</scope>
    <source>
        <tissue evidence="7">Brain</tissue>
    </source>
</reference>
<proteinExistence type="evidence at transcript level"/>
<dbReference type="EMBL" id="AY845030">
    <property type="protein sequence ID" value="AAX11928.1"/>
    <property type="molecule type" value="mRNA"/>
</dbReference>
<dbReference type="EMBL" id="BX465191">
    <property type="protein sequence ID" value="CAX13214.1"/>
    <property type="molecule type" value="Genomic_DNA"/>
</dbReference>
<dbReference type="EMBL" id="BC171392">
    <property type="protein sequence ID" value="AAI71392.1"/>
    <property type="molecule type" value="mRNA"/>
</dbReference>
<dbReference type="RefSeq" id="NP_956757.2">
    <property type="nucleotide sequence ID" value="NM_200463.2"/>
</dbReference>
<dbReference type="SMR" id="Q2TLY1"/>
<dbReference type="FunCoup" id="Q2TLY1">
    <property type="interactions" value="247"/>
</dbReference>
<dbReference type="STRING" id="7955.ENSDARP00000069055"/>
<dbReference type="GlyCosmos" id="Q2TLY1">
    <property type="glycosylation" value="5 sites, No reported glycans"/>
</dbReference>
<dbReference type="PaxDb" id="7955-ENSDARP00000069055"/>
<dbReference type="Ensembl" id="ENSDART00000074567">
    <property type="protein sequence ID" value="ENSDARP00000069055"/>
    <property type="gene ID" value="ENSDARG00000012741"/>
</dbReference>
<dbReference type="GeneID" id="393435"/>
<dbReference type="KEGG" id="dre:393435"/>
<dbReference type="AGR" id="ZFIN:ZDB-GENE-040426-1188"/>
<dbReference type="CTD" id="393435"/>
<dbReference type="ZFIN" id="ZDB-GENE-040426-1188">
    <property type="gene designation" value="maco1b"/>
</dbReference>
<dbReference type="eggNOG" id="KOG1821">
    <property type="taxonomic scope" value="Eukaryota"/>
</dbReference>
<dbReference type="InParanoid" id="Q2TLY1"/>
<dbReference type="OMA" id="KQRTACE"/>
<dbReference type="OrthoDB" id="10071111at2759"/>
<dbReference type="PhylomeDB" id="Q2TLY1"/>
<dbReference type="TreeFam" id="TF324023"/>
<dbReference type="PRO" id="PR:Q2TLY1"/>
<dbReference type="Proteomes" id="UP000000437">
    <property type="component" value="Chromosome 13"/>
</dbReference>
<dbReference type="Bgee" id="ENSDARG00000012741">
    <property type="expression patterns" value="Expressed in blastula and 20 other cell types or tissues"/>
</dbReference>
<dbReference type="ExpressionAtlas" id="Q2TLY1">
    <property type="expression patterns" value="baseline and differential"/>
</dbReference>
<dbReference type="GO" id="GO:0030424">
    <property type="term" value="C:axon"/>
    <property type="evidence" value="ECO:0007669"/>
    <property type="project" value="UniProtKB-SubCell"/>
</dbReference>
<dbReference type="GO" id="GO:0031965">
    <property type="term" value="C:nuclear membrane"/>
    <property type="evidence" value="ECO:0000318"/>
    <property type="project" value="GO_Central"/>
</dbReference>
<dbReference type="GO" id="GO:0030867">
    <property type="term" value="C:rough endoplasmic reticulum membrane"/>
    <property type="evidence" value="ECO:0000318"/>
    <property type="project" value="GO_Central"/>
</dbReference>
<dbReference type="GO" id="GO:0008017">
    <property type="term" value="F:microtubule binding"/>
    <property type="evidence" value="ECO:0000318"/>
    <property type="project" value="GO_Central"/>
</dbReference>
<dbReference type="GO" id="GO:0006935">
    <property type="term" value="P:chemotaxis"/>
    <property type="evidence" value="ECO:0000318"/>
    <property type="project" value="GO_Central"/>
</dbReference>
<dbReference type="GO" id="GO:0023041">
    <property type="term" value="P:neuronal signal transduction"/>
    <property type="evidence" value="ECO:0000318"/>
    <property type="project" value="GO_Central"/>
</dbReference>
<dbReference type="InterPro" id="IPR019130">
    <property type="entry name" value="Macoilin"/>
</dbReference>
<dbReference type="PANTHER" id="PTHR47464">
    <property type="entry name" value="MACOILIN"/>
    <property type="match status" value="1"/>
</dbReference>
<dbReference type="PANTHER" id="PTHR47464:SF3">
    <property type="entry name" value="MACOILIN-2 ISOFORM X1"/>
    <property type="match status" value="1"/>
</dbReference>
<dbReference type="Pfam" id="PF09726">
    <property type="entry name" value="Macoilin"/>
    <property type="match status" value="1"/>
</dbReference>
<feature type="chain" id="PRO_0000408366" description="Macoilin-2">
    <location>
        <begin position="1"/>
        <end position="699"/>
    </location>
</feature>
<feature type="transmembrane region" description="Helical" evidence="4">
    <location>
        <begin position="28"/>
        <end position="48"/>
    </location>
</feature>
<feature type="transmembrane region" description="Helical" evidence="4">
    <location>
        <begin position="75"/>
        <end position="95"/>
    </location>
</feature>
<feature type="transmembrane region" description="Helical" evidence="4">
    <location>
        <begin position="120"/>
        <end position="140"/>
    </location>
</feature>
<feature type="transmembrane region" description="Helical" evidence="4">
    <location>
        <begin position="154"/>
        <end position="174"/>
    </location>
</feature>
<feature type="region of interest" description="Disordered" evidence="5">
    <location>
        <begin position="219"/>
        <end position="289"/>
    </location>
</feature>
<feature type="region of interest" description="Disordered" evidence="5">
    <location>
        <begin position="322"/>
        <end position="411"/>
    </location>
</feature>
<feature type="region of interest" description="Disordered" evidence="5">
    <location>
        <begin position="432"/>
        <end position="451"/>
    </location>
</feature>
<feature type="region of interest" description="Disordered" evidence="5">
    <location>
        <begin position="679"/>
        <end position="699"/>
    </location>
</feature>
<feature type="compositionally biased region" description="Basic and acidic residues" evidence="5">
    <location>
        <begin position="257"/>
        <end position="271"/>
    </location>
</feature>
<feature type="compositionally biased region" description="Low complexity" evidence="5">
    <location>
        <begin position="329"/>
        <end position="346"/>
    </location>
</feature>
<feature type="compositionally biased region" description="Low complexity" evidence="5">
    <location>
        <begin position="366"/>
        <end position="382"/>
    </location>
</feature>
<feature type="glycosylation site" description="N-linked (GlcNAc...) asparagine" evidence="4">
    <location>
        <position position="241"/>
    </location>
</feature>
<feature type="glycosylation site" description="N-linked (GlcNAc...) asparagine" evidence="4">
    <location>
        <position position="267"/>
    </location>
</feature>
<feature type="glycosylation site" description="N-linked (GlcNAc...) asparagine" evidence="4">
    <location>
        <position position="345"/>
    </location>
</feature>
<feature type="glycosylation site" description="N-linked (GlcNAc...) asparagine" evidence="4">
    <location>
        <position position="365"/>
    </location>
</feature>
<feature type="glycosylation site" description="N-linked (GlcNAc...) asparagine" evidence="4">
    <location>
        <position position="690"/>
    </location>
</feature>
<feature type="sequence conflict" description="In Ref. 3; AAI71392." evidence="6" ref="3">
    <location>
        <position position="226"/>
    </location>
</feature>
<feature type="sequence conflict" description="In Ref. 3; AAI71392." evidence="6" ref="3">
    <location>
        <begin position="275"/>
        <end position="276"/>
    </location>
</feature>
<keyword id="KW-0966">Cell projection</keyword>
<keyword id="KW-0256">Endoplasmic reticulum</keyword>
<keyword id="KW-0325">Glycoprotein</keyword>
<keyword id="KW-0472">Membrane</keyword>
<keyword id="KW-0539">Nucleus</keyword>
<keyword id="KW-1185">Reference proteome</keyword>
<keyword id="KW-0812">Transmembrane</keyword>
<keyword id="KW-1133">Transmembrane helix</keyword>
<gene>
    <name evidence="9" type="primary">maco1b</name>
    <name type="synonym">tmem57b</name>
    <name type="ORF">si:dkey-9g4.5</name>
    <name type="ORF">zgc:63610</name>
</gene>
<sequence>MKRRNADCSKLRRPLKRNRITEGIYGSTFLYLKFLVVWALVLLADFVLEFRFEYLWPFWLFIRSVYDSFRYQGLAFSVFFVCVAFTSDIICLLFIPVQWLFFAASTYVWVQYVWHTERGVCLPTVSLWILFVYIEAAIRFKDLKHFHVDLCRPFAAHCIGYPVVTLGFGFKSYVSYKMRLRKQKEVQKENEFYMQLLQQALPPEQQLIQRQEREAEEAAAAAAAAASKSIHDVDSPAVAQNGSAGGKKPSSNTLPELEYREKERGKNESKKQHNHNQNHHSSTSSSILPSVDNKAQEMEYMENHVNSKRLSSSDLLGSTENLLKDEHSSSSSSSTSSNSNKNYKNASGGGGGGGSSSPRGHGTANGSVPSSSGPSSSASSSSKGDRKQKYGGGKNSASHRDPVENCIPNNQLSKPEALVRLEQDVKKLKADLQASRQTEQDLRSQLGSLGTSERSIRSELGQLRQENELLQNKLHNAVQAKQKDKQTLGQLEKRLKAEQEARAAAEKLLAEEKKRKKLEEATAARAVALAAATRGECTESLRRRISELEAECKKLTLDIKVKEDQIRELELKVQELHKYKENEKDTEVLMSALSAMQDKTQHLENSLSAETRIKLDLFSALGDAKRQLEIAQGQILQKDQEIKDLKQKIAEVMAVMPSVVYSADTGSMTPVTPHYSSKFMDTSPSGLDPNASVYQPLKK</sequence>
<name>MACO2_DANRE</name>